<protein>
    <recommendedName>
        <fullName>Vitamin B12-dependent ribonucleotide reductase</fullName>
        <ecNumber>1.17.4.1</ecNumber>
    </recommendedName>
    <alternativeName>
        <fullName>Ribonucleoside-diphosphate reductase NrdJ</fullName>
    </alternativeName>
</protein>
<sequence>MKMNRHFTVPQNGESSTIQWTKRNSKITNPDGSKVFEANDILVPEDWSQVAVDILAQKYFRRKGVPKYLKKVQEDGIPEWLQKSIPDTEKLESLKPEDRFGGETSALEVFHRLAGCWTYWGYKYKYFSDEESAKIFYDEIVYMLATQMAAPNSPQWFNTGLNWAYGIDGKSQGHYYVDPSTGKLVKSTSAYEHPQPHACFIQSVDDDLVNEGGIMDLWVREARLFKYGSGTGTNFSNLRGENEPLSGGGKSSGLMSFLKIGDRAAGAIKSGGTTRRAAKMVCLDVDHPDIENFIDWKVTEEKKVASLVTGSMLNNRHLNAIMSACYEMEGEDRFNPKKNSSLKKTIQDAKKVLIPDNYIKRVIDLARQGYKEILFEELTTDWQSDAYNTVSGQNSNNSIRLTNEFMAAVEQDQPWNLYFRTEKEKAKVEGRKAKPSQTLRARELWEKISYAAWASADPGTQYHTTINEWHTCPEDGPINASNPCSEYMFLDNTACNLASANLQKFVNLETLNFDVEGFRYLCKLWTIILEISVTMAQFPSKEIAELSYKFRTLGLGYANLGSVLMVLGIPYDSQQAMAITGAISSIMHMTAYATSAEMAKEQGPFVGYAKNQKHMLRVIRNHRRAAYNAPSGDYEGLTITPIGINPAFCPSYMLKAAQEDADLALSLGEKYGFRNAQVTVIAPTGTIGLVMDCDTTGIEPDFTLVKFKKLAGGGYFKIINQSVPYGLKKLGYSPSEIEAIVNYCKGHATLNGAPVINTQALKEKGFTNEILEKVEASLPLAFDINFAFNKFNLGENFLTKNLGISKEIFDSPGFSLLEHLGFTKEDINKANDYVCGTMTIENAPFLKEKDYPVFDCANKCGKYGKRFLSYESHIRIMAAAQPFISGAISKTINLPEEAVIEDIKNAYFLSWKMMIKANALYRDGSKLSQPLNSVLELLNGIEIDDQEEIREATISKDPVQIAEKIVTKYISHRRKLPSRRAGYTQKAIVGGHKVYLRTGEYEDGQIGEIFIDMHKEGAAFRSLMNAFAISVSLGLQHGVPLEEYVDAFTFFKFEPNGIVSGNKHIKMSTSVIDYIFRELAITYLGRYDLGQVAPEDLRGDEIGSKRATAESNGQEKETLSSMTAVIEPTPKKEVETISYSQMISKEKPSSSPSGISLLEEVKLAKIKGYTGDSCSECGSFEMVRNGSCLKCMSCGSTTGCS</sequence>
<comment type="function">
    <text evidence="1">Catalyzes the reduction of ribonucleotides to deoxyribonucleotides. May function to provide a pool of deoxyribonucleotide precursors for DNA repair during oxygen limitation and/or for immediate growth after restoration of oxygen (By similarity).</text>
</comment>
<comment type="catalytic activity">
    <reaction>
        <text>a 2'-deoxyribonucleoside 5'-diphosphate + [thioredoxin]-disulfide + H2O = a ribonucleoside 5'-diphosphate + [thioredoxin]-dithiol</text>
        <dbReference type="Rhea" id="RHEA:23252"/>
        <dbReference type="Rhea" id="RHEA-COMP:10698"/>
        <dbReference type="Rhea" id="RHEA-COMP:10700"/>
        <dbReference type="ChEBI" id="CHEBI:15377"/>
        <dbReference type="ChEBI" id="CHEBI:29950"/>
        <dbReference type="ChEBI" id="CHEBI:50058"/>
        <dbReference type="ChEBI" id="CHEBI:57930"/>
        <dbReference type="ChEBI" id="CHEBI:73316"/>
        <dbReference type="EC" id="1.17.4.1"/>
    </reaction>
</comment>
<comment type="cofactor">
    <cofactor evidence="1">
        <name>adenosylcob(III)alamin</name>
        <dbReference type="ChEBI" id="CHEBI:18408"/>
    </cofactor>
    <text evidence="1">5'-deoxyadenosylcobalamine (coenzyme B12).</text>
</comment>
<comment type="similarity">
    <text evidence="3">Belongs to the ribonucleoside diphosphate reductase class-2 family.</text>
</comment>
<reference key="1">
    <citation type="journal article" date="2003" name="Nature">
        <title>Unique physiological and pathogenic features of Leptospira interrogans revealed by whole-genome sequencing.</title>
        <authorList>
            <person name="Ren S.-X."/>
            <person name="Fu G."/>
            <person name="Jiang X.-G."/>
            <person name="Zeng R."/>
            <person name="Miao Y.-G."/>
            <person name="Xu H."/>
            <person name="Zhang Y.-X."/>
            <person name="Xiong H."/>
            <person name="Lu G."/>
            <person name="Lu L.-F."/>
            <person name="Jiang H.-Q."/>
            <person name="Jia J."/>
            <person name="Tu Y.-F."/>
            <person name="Jiang J.-X."/>
            <person name="Gu W.-Y."/>
            <person name="Zhang Y.-Q."/>
            <person name="Cai Z."/>
            <person name="Sheng H.-H."/>
            <person name="Yin H.-F."/>
            <person name="Zhang Y."/>
            <person name="Zhu G.-F."/>
            <person name="Wan M."/>
            <person name="Huang H.-L."/>
            <person name="Qian Z."/>
            <person name="Wang S.-Y."/>
            <person name="Ma W."/>
            <person name="Yao Z.-J."/>
            <person name="Shen Y."/>
            <person name="Qiang B.-Q."/>
            <person name="Xia Q.-C."/>
            <person name="Guo X.-K."/>
            <person name="Danchin A."/>
            <person name="Saint Girons I."/>
            <person name="Somerville R.L."/>
            <person name="Wen Y.-M."/>
            <person name="Shi M.-H."/>
            <person name="Chen Z."/>
            <person name="Xu J.-G."/>
            <person name="Zhao G.-P."/>
        </authorList>
    </citation>
    <scope>NUCLEOTIDE SEQUENCE [LARGE SCALE GENOMIC DNA]</scope>
    <source>
        <strain>56601</strain>
    </source>
</reference>
<organism>
    <name type="scientific">Leptospira interrogans serogroup Icterohaemorrhagiae serovar Lai (strain 56601)</name>
    <dbReference type="NCBI Taxonomy" id="189518"/>
    <lineage>
        <taxon>Bacteria</taxon>
        <taxon>Pseudomonadati</taxon>
        <taxon>Spirochaetota</taxon>
        <taxon>Spirochaetia</taxon>
        <taxon>Leptospirales</taxon>
        <taxon>Leptospiraceae</taxon>
        <taxon>Leptospira</taxon>
    </lineage>
</organism>
<accession>Q8F3P1</accession>
<evidence type="ECO:0000250" key="1"/>
<evidence type="ECO:0000256" key="2">
    <source>
        <dbReference type="SAM" id="MobiDB-lite"/>
    </source>
</evidence>
<evidence type="ECO:0000305" key="3"/>
<name>NRDJ_LEPIN</name>
<gene>
    <name type="primary">nrdJ</name>
    <name type="ordered locus">LA_2360</name>
</gene>
<feature type="chain" id="PRO_0000231660" description="Vitamin B12-dependent ribonucleotide reductase">
    <location>
        <begin position="1"/>
        <end position="1201"/>
    </location>
</feature>
<feature type="region of interest" description="Disordered" evidence="2">
    <location>
        <begin position="1100"/>
        <end position="1120"/>
    </location>
</feature>
<feature type="compositionally biased region" description="Basic and acidic residues" evidence="2">
    <location>
        <begin position="1100"/>
        <end position="1118"/>
    </location>
</feature>
<feature type="active site" description="Proton acceptor" evidence="1">
    <location>
        <position position="482"/>
    </location>
</feature>
<feature type="active site" description="Cysteine radical intermediate" evidence="1">
    <location>
        <position position="484"/>
    </location>
</feature>
<feature type="active site" description="Proton acceptor" evidence="1">
    <location>
        <position position="486"/>
    </location>
</feature>
<feature type="binding site" evidence="1">
    <location>
        <position position="153"/>
    </location>
    <ligand>
        <name>substrate</name>
    </ligand>
</feature>
<feature type="binding site" evidence="1">
    <location>
        <begin position="198"/>
        <end position="199"/>
    </location>
    <ligand>
        <name>substrate</name>
    </ligand>
</feature>
<feature type="binding site" evidence="1">
    <location>
        <position position="230"/>
    </location>
    <ligand>
        <name>substrate</name>
    </ligand>
</feature>
<feature type="binding site" evidence="1">
    <location>
        <begin position="482"/>
        <end position="486"/>
    </location>
    <ligand>
        <name>substrate</name>
    </ligand>
</feature>
<feature type="binding site" evidence="1">
    <location>
        <begin position="683"/>
        <end position="687"/>
    </location>
    <ligand>
        <name>substrate</name>
    </ligand>
</feature>
<feature type="disulfide bond" description="Redox-active" evidence="1">
    <location>
        <begin position="199"/>
        <end position="495"/>
    </location>
</feature>
<dbReference type="EC" id="1.17.4.1"/>
<dbReference type="EMBL" id="AE010300">
    <property type="protein sequence ID" value="AAN49559.2"/>
    <property type="molecule type" value="Genomic_DNA"/>
</dbReference>
<dbReference type="RefSeq" id="NP_712541.2">
    <property type="nucleotide sequence ID" value="NC_004342.2"/>
</dbReference>
<dbReference type="RefSeq" id="WP_000783498.1">
    <property type="nucleotide sequence ID" value="NC_004342.2"/>
</dbReference>
<dbReference type="SMR" id="Q8F3P1"/>
<dbReference type="STRING" id="189518.LA_2360"/>
<dbReference type="PaxDb" id="189518-LA_2360"/>
<dbReference type="EnsemblBacteria" id="AAN49559">
    <property type="protein sequence ID" value="AAN49559"/>
    <property type="gene ID" value="LA_2360"/>
</dbReference>
<dbReference type="KEGG" id="lil:LA_2360"/>
<dbReference type="PATRIC" id="fig|189518.3.peg.2342"/>
<dbReference type="HOGENOM" id="CLU_000404_0_1_12"/>
<dbReference type="InParanoid" id="Q8F3P1"/>
<dbReference type="OrthoDB" id="9762933at2"/>
<dbReference type="Proteomes" id="UP000001408">
    <property type="component" value="Chromosome I"/>
</dbReference>
<dbReference type="GO" id="GO:0031419">
    <property type="term" value="F:cobalamin binding"/>
    <property type="evidence" value="ECO:0007669"/>
    <property type="project" value="UniProtKB-KW"/>
</dbReference>
<dbReference type="GO" id="GO:0050897">
    <property type="term" value="F:cobalt ion binding"/>
    <property type="evidence" value="ECO:0007669"/>
    <property type="project" value="InterPro"/>
</dbReference>
<dbReference type="GO" id="GO:0000166">
    <property type="term" value="F:nucleotide binding"/>
    <property type="evidence" value="ECO:0007669"/>
    <property type="project" value="UniProtKB-KW"/>
</dbReference>
<dbReference type="GO" id="GO:0004748">
    <property type="term" value="F:ribonucleoside-diphosphate reductase activity, thioredoxin disulfide as acceptor"/>
    <property type="evidence" value="ECO:0000318"/>
    <property type="project" value="GO_Central"/>
</dbReference>
<dbReference type="GO" id="GO:0071897">
    <property type="term" value="P:DNA biosynthetic process"/>
    <property type="evidence" value="ECO:0007669"/>
    <property type="project" value="UniProtKB-KW"/>
</dbReference>
<dbReference type="CDD" id="cd02888">
    <property type="entry name" value="RNR_II_dimer"/>
    <property type="match status" value="1"/>
</dbReference>
<dbReference type="FunFam" id="3.20.70.20:FF:000015">
    <property type="entry name" value="Vitamin B12-dependent ribonucleotide reductase"/>
    <property type="match status" value="1"/>
</dbReference>
<dbReference type="FunFam" id="3.20.70.20:FF:000016">
    <property type="entry name" value="Vitamin B12-dependent ribonucleotide reductase"/>
    <property type="match status" value="1"/>
</dbReference>
<dbReference type="FunFam" id="3.20.70.20:FF:000017">
    <property type="entry name" value="Vitamin B12-dependent ribonucleotide reductase"/>
    <property type="match status" value="1"/>
</dbReference>
<dbReference type="Gene3D" id="3.20.70.20">
    <property type="match status" value="3"/>
</dbReference>
<dbReference type="InterPro" id="IPR050862">
    <property type="entry name" value="RdRp_reductase_class-2"/>
</dbReference>
<dbReference type="InterPro" id="IPR013678">
    <property type="entry name" value="RNR_2_N"/>
</dbReference>
<dbReference type="InterPro" id="IPR000788">
    <property type="entry name" value="RNR_lg_C"/>
</dbReference>
<dbReference type="InterPro" id="IPR013344">
    <property type="entry name" value="RNR_NrdJ/NrdZ"/>
</dbReference>
<dbReference type="InterPro" id="IPR024434">
    <property type="entry name" value="TSCPD_dom"/>
</dbReference>
<dbReference type="InterPro" id="IPR029072">
    <property type="entry name" value="YebC-like"/>
</dbReference>
<dbReference type="NCBIfam" id="TIGR02504">
    <property type="entry name" value="NrdJ_Z"/>
    <property type="match status" value="1"/>
</dbReference>
<dbReference type="NCBIfam" id="NF005736">
    <property type="entry name" value="PRK07562.1"/>
    <property type="match status" value="1"/>
</dbReference>
<dbReference type="PANTHER" id="PTHR43371:SF1">
    <property type="entry name" value="RIBONUCLEOSIDE-DIPHOSPHATE REDUCTASE"/>
    <property type="match status" value="1"/>
</dbReference>
<dbReference type="PANTHER" id="PTHR43371">
    <property type="entry name" value="VITAMIN B12-DEPENDENT RIBONUCLEOTIDE REDUCTASE"/>
    <property type="match status" value="1"/>
</dbReference>
<dbReference type="Pfam" id="PF08471">
    <property type="entry name" value="Ribonuc_red_2_N"/>
    <property type="match status" value="1"/>
</dbReference>
<dbReference type="Pfam" id="PF02867">
    <property type="entry name" value="Ribonuc_red_lgC"/>
    <property type="match status" value="2"/>
</dbReference>
<dbReference type="Pfam" id="PF12637">
    <property type="entry name" value="TSCPD"/>
    <property type="match status" value="1"/>
</dbReference>
<dbReference type="PRINTS" id="PR01183">
    <property type="entry name" value="RIBORDTASEM1"/>
</dbReference>
<dbReference type="SUPFAM" id="SSF51998">
    <property type="entry name" value="PFL-like glycyl radical enzymes"/>
    <property type="match status" value="1"/>
</dbReference>
<dbReference type="SUPFAM" id="SSF75625">
    <property type="entry name" value="YebC-like"/>
    <property type="match status" value="1"/>
</dbReference>
<keyword id="KW-0846">Cobalamin</keyword>
<keyword id="KW-0170">Cobalt</keyword>
<keyword id="KW-1015">Disulfide bond</keyword>
<keyword id="KW-0237">DNA synthesis</keyword>
<keyword id="KW-0547">Nucleotide-binding</keyword>
<keyword id="KW-0560">Oxidoreductase</keyword>
<keyword id="KW-1185">Reference proteome</keyword>
<proteinExistence type="inferred from homology"/>